<proteinExistence type="evidence at transcript level"/>
<keyword id="KW-0880">Kelch repeat</keyword>
<keyword id="KW-1185">Reference proteome</keyword>
<keyword id="KW-0677">Repeat</keyword>
<protein>
    <recommendedName>
        <fullName>F-box/kelch-repeat protein At1g15670</fullName>
    </recommendedName>
</protein>
<accession>Q9LMR5</accession>
<dbReference type="EMBL" id="AC034256">
    <property type="protein sequence ID" value="AAF82137.1"/>
    <property type="molecule type" value="Genomic_DNA"/>
</dbReference>
<dbReference type="EMBL" id="CP002684">
    <property type="protein sequence ID" value="AEE29347.1"/>
    <property type="molecule type" value="Genomic_DNA"/>
</dbReference>
<dbReference type="EMBL" id="AF332423">
    <property type="protein sequence ID" value="AAG48786.1"/>
    <property type="molecule type" value="mRNA"/>
</dbReference>
<dbReference type="EMBL" id="AY049307">
    <property type="protein sequence ID" value="AAK83649.1"/>
    <property type="molecule type" value="mRNA"/>
</dbReference>
<dbReference type="EMBL" id="AY057738">
    <property type="protein sequence ID" value="AAL15368.1"/>
    <property type="molecule type" value="mRNA"/>
</dbReference>
<dbReference type="EMBL" id="AK228088">
    <property type="protein sequence ID" value="BAF00047.1"/>
    <property type="molecule type" value="mRNA"/>
</dbReference>
<dbReference type="PIR" id="G86290">
    <property type="entry name" value="G86290"/>
</dbReference>
<dbReference type="RefSeq" id="NP_563979.1">
    <property type="nucleotide sequence ID" value="NM_101435.3"/>
</dbReference>
<dbReference type="SMR" id="Q9LMR5"/>
<dbReference type="BioGRID" id="23376">
    <property type="interactions" value="8"/>
</dbReference>
<dbReference type="FunCoup" id="Q9LMR5">
    <property type="interactions" value="88"/>
</dbReference>
<dbReference type="IntAct" id="Q9LMR5">
    <property type="interactions" value="4"/>
</dbReference>
<dbReference type="STRING" id="3702.Q9LMR5"/>
<dbReference type="iPTMnet" id="Q9LMR5"/>
<dbReference type="PaxDb" id="3702-AT1G15670.1"/>
<dbReference type="ProteomicsDB" id="230518"/>
<dbReference type="EnsemblPlants" id="AT1G15670.1">
    <property type="protein sequence ID" value="AT1G15670.1"/>
    <property type="gene ID" value="AT1G15670"/>
</dbReference>
<dbReference type="GeneID" id="838136"/>
<dbReference type="Gramene" id="AT1G15670.1">
    <property type="protein sequence ID" value="AT1G15670.1"/>
    <property type="gene ID" value="AT1G15670"/>
</dbReference>
<dbReference type="KEGG" id="ath:AT1G15670"/>
<dbReference type="Araport" id="AT1G15670"/>
<dbReference type="TAIR" id="AT1G15670">
    <property type="gene designation" value="KMD2"/>
</dbReference>
<dbReference type="eggNOG" id="KOG1072">
    <property type="taxonomic scope" value="Eukaryota"/>
</dbReference>
<dbReference type="HOGENOM" id="CLU_028510_1_0_1"/>
<dbReference type="InParanoid" id="Q9LMR5"/>
<dbReference type="OMA" id="KLWQREI"/>
<dbReference type="PhylomeDB" id="Q9LMR5"/>
<dbReference type="PRO" id="PR:Q9LMR5"/>
<dbReference type="Proteomes" id="UP000006548">
    <property type="component" value="Chromosome 1"/>
</dbReference>
<dbReference type="ExpressionAtlas" id="Q9LMR5">
    <property type="expression patterns" value="baseline and differential"/>
</dbReference>
<dbReference type="GO" id="GO:0005829">
    <property type="term" value="C:cytosol"/>
    <property type="evidence" value="ECO:0000314"/>
    <property type="project" value="TAIR"/>
</dbReference>
<dbReference type="GO" id="GO:0080037">
    <property type="term" value="P:negative regulation of cytokinin-activated signaling pathway"/>
    <property type="evidence" value="ECO:0000316"/>
    <property type="project" value="TAIR"/>
</dbReference>
<dbReference type="GO" id="GO:2000762">
    <property type="term" value="P:regulation of phenylpropanoid metabolic process"/>
    <property type="evidence" value="ECO:0000316"/>
    <property type="project" value="TAIR"/>
</dbReference>
<dbReference type="FunFam" id="2.120.10.80:FF:000199">
    <property type="entry name" value="F-box/kelch-repeat protein SKIP20"/>
    <property type="match status" value="1"/>
</dbReference>
<dbReference type="Gene3D" id="2.120.10.80">
    <property type="entry name" value="Kelch-type beta propeller"/>
    <property type="match status" value="1"/>
</dbReference>
<dbReference type="InterPro" id="IPR015915">
    <property type="entry name" value="Kelch-typ_b-propeller"/>
</dbReference>
<dbReference type="InterPro" id="IPR006652">
    <property type="entry name" value="Kelch_1"/>
</dbReference>
<dbReference type="InterPro" id="IPR044595">
    <property type="entry name" value="KMD1-4"/>
</dbReference>
<dbReference type="PANTHER" id="PTHR46407:SF20">
    <property type="entry name" value="GENOME ASSEMBLY, CHROMOSOME: A06"/>
    <property type="match status" value="1"/>
</dbReference>
<dbReference type="PANTHER" id="PTHR46407">
    <property type="entry name" value="OS02G0208700 PROTEIN"/>
    <property type="match status" value="1"/>
</dbReference>
<dbReference type="Pfam" id="PF01344">
    <property type="entry name" value="Kelch_1"/>
    <property type="match status" value="1"/>
</dbReference>
<dbReference type="Pfam" id="PF13964">
    <property type="entry name" value="Kelch_6"/>
    <property type="match status" value="1"/>
</dbReference>
<dbReference type="SMART" id="SM00612">
    <property type="entry name" value="Kelch"/>
    <property type="match status" value="2"/>
</dbReference>
<dbReference type="SUPFAM" id="SSF117281">
    <property type="entry name" value="Kelch motif"/>
    <property type="match status" value="1"/>
</dbReference>
<organism>
    <name type="scientific">Arabidopsis thaliana</name>
    <name type="common">Mouse-ear cress</name>
    <dbReference type="NCBI Taxonomy" id="3702"/>
    <lineage>
        <taxon>Eukaryota</taxon>
        <taxon>Viridiplantae</taxon>
        <taxon>Streptophyta</taxon>
        <taxon>Embryophyta</taxon>
        <taxon>Tracheophyta</taxon>
        <taxon>Spermatophyta</taxon>
        <taxon>Magnoliopsida</taxon>
        <taxon>eudicotyledons</taxon>
        <taxon>Gunneridae</taxon>
        <taxon>Pentapetalae</taxon>
        <taxon>rosids</taxon>
        <taxon>malvids</taxon>
        <taxon>Brassicales</taxon>
        <taxon>Brassicaceae</taxon>
        <taxon>Camelineae</taxon>
        <taxon>Arabidopsis</taxon>
    </lineage>
</organism>
<feature type="chain" id="PRO_0000396068" description="F-box/kelch-repeat protein At1g15670">
    <location>
        <begin position="1"/>
        <end position="359"/>
    </location>
</feature>
<feature type="domain" description="F-box">
    <location>
        <begin position="2"/>
        <end position="49"/>
    </location>
</feature>
<feature type="repeat" description="Kelch 1">
    <location>
        <begin position="119"/>
        <end position="167"/>
    </location>
</feature>
<feature type="repeat" description="Kelch 2">
    <location>
        <begin position="170"/>
        <end position="217"/>
    </location>
</feature>
<feature type="repeat" description="Kelch 3">
    <location>
        <begin position="219"/>
        <end position="269"/>
    </location>
</feature>
<feature type="repeat" description="Kelch 4">
    <location>
        <begin position="271"/>
        <end position="310"/>
    </location>
</feature>
<feature type="repeat" description="Kelch 5">
    <location>
        <begin position="313"/>
        <end position="358"/>
    </location>
</feature>
<name>FK126_ARATH</name>
<reference key="1">
    <citation type="journal article" date="2000" name="Nature">
        <title>Sequence and analysis of chromosome 1 of the plant Arabidopsis thaliana.</title>
        <authorList>
            <person name="Theologis A."/>
            <person name="Ecker J.R."/>
            <person name="Palm C.J."/>
            <person name="Federspiel N.A."/>
            <person name="Kaul S."/>
            <person name="White O."/>
            <person name="Alonso J."/>
            <person name="Altafi H."/>
            <person name="Araujo R."/>
            <person name="Bowman C.L."/>
            <person name="Brooks S.Y."/>
            <person name="Buehler E."/>
            <person name="Chan A."/>
            <person name="Chao Q."/>
            <person name="Chen H."/>
            <person name="Cheuk R.F."/>
            <person name="Chin C.W."/>
            <person name="Chung M.K."/>
            <person name="Conn L."/>
            <person name="Conway A.B."/>
            <person name="Conway A.R."/>
            <person name="Creasy T.H."/>
            <person name="Dewar K."/>
            <person name="Dunn P."/>
            <person name="Etgu P."/>
            <person name="Feldblyum T.V."/>
            <person name="Feng J.-D."/>
            <person name="Fong B."/>
            <person name="Fujii C.Y."/>
            <person name="Gill J.E."/>
            <person name="Goldsmith A.D."/>
            <person name="Haas B."/>
            <person name="Hansen N.F."/>
            <person name="Hughes B."/>
            <person name="Huizar L."/>
            <person name="Hunter J.L."/>
            <person name="Jenkins J."/>
            <person name="Johnson-Hopson C."/>
            <person name="Khan S."/>
            <person name="Khaykin E."/>
            <person name="Kim C.J."/>
            <person name="Koo H.L."/>
            <person name="Kremenetskaia I."/>
            <person name="Kurtz D.B."/>
            <person name="Kwan A."/>
            <person name="Lam B."/>
            <person name="Langin-Hooper S."/>
            <person name="Lee A."/>
            <person name="Lee J.M."/>
            <person name="Lenz C.A."/>
            <person name="Li J.H."/>
            <person name="Li Y.-P."/>
            <person name="Lin X."/>
            <person name="Liu S.X."/>
            <person name="Liu Z.A."/>
            <person name="Luros J.S."/>
            <person name="Maiti R."/>
            <person name="Marziali A."/>
            <person name="Militscher J."/>
            <person name="Miranda M."/>
            <person name="Nguyen M."/>
            <person name="Nierman W.C."/>
            <person name="Osborne B.I."/>
            <person name="Pai G."/>
            <person name="Peterson J."/>
            <person name="Pham P.K."/>
            <person name="Rizzo M."/>
            <person name="Rooney T."/>
            <person name="Rowley D."/>
            <person name="Sakano H."/>
            <person name="Salzberg S.L."/>
            <person name="Schwartz J.R."/>
            <person name="Shinn P."/>
            <person name="Southwick A.M."/>
            <person name="Sun H."/>
            <person name="Tallon L.J."/>
            <person name="Tambunga G."/>
            <person name="Toriumi M.J."/>
            <person name="Town C.D."/>
            <person name="Utterback T."/>
            <person name="Van Aken S."/>
            <person name="Vaysberg M."/>
            <person name="Vysotskaia V.S."/>
            <person name="Walker M."/>
            <person name="Wu D."/>
            <person name="Yu G."/>
            <person name="Fraser C.M."/>
            <person name="Venter J.C."/>
            <person name="Davis R.W."/>
        </authorList>
    </citation>
    <scope>NUCLEOTIDE SEQUENCE [LARGE SCALE GENOMIC DNA]</scope>
    <source>
        <strain>cv. Columbia</strain>
    </source>
</reference>
<reference key="2">
    <citation type="journal article" date="2017" name="Plant J.">
        <title>Araport11: a complete reannotation of the Arabidopsis thaliana reference genome.</title>
        <authorList>
            <person name="Cheng C.Y."/>
            <person name="Krishnakumar V."/>
            <person name="Chan A.P."/>
            <person name="Thibaud-Nissen F."/>
            <person name="Schobel S."/>
            <person name="Town C.D."/>
        </authorList>
    </citation>
    <scope>GENOME REANNOTATION</scope>
    <source>
        <strain>cv. Columbia</strain>
    </source>
</reference>
<reference key="3">
    <citation type="journal article" date="2003" name="Science">
        <title>Empirical analysis of transcriptional activity in the Arabidopsis genome.</title>
        <authorList>
            <person name="Yamada K."/>
            <person name="Lim J."/>
            <person name="Dale J.M."/>
            <person name="Chen H."/>
            <person name="Shinn P."/>
            <person name="Palm C.J."/>
            <person name="Southwick A.M."/>
            <person name="Wu H.C."/>
            <person name="Kim C.J."/>
            <person name="Nguyen M."/>
            <person name="Pham P.K."/>
            <person name="Cheuk R.F."/>
            <person name="Karlin-Newmann G."/>
            <person name="Liu S.X."/>
            <person name="Lam B."/>
            <person name="Sakano H."/>
            <person name="Wu T."/>
            <person name="Yu G."/>
            <person name="Miranda M."/>
            <person name="Quach H.L."/>
            <person name="Tripp M."/>
            <person name="Chang C.H."/>
            <person name="Lee J.M."/>
            <person name="Toriumi M.J."/>
            <person name="Chan M.M."/>
            <person name="Tang C.C."/>
            <person name="Onodera C.S."/>
            <person name="Deng J.M."/>
            <person name="Akiyama K."/>
            <person name="Ansari Y."/>
            <person name="Arakawa T."/>
            <person name="Banh J."/>
            <person name="Banno F."/>
            <person name="Bowser L."/>
            <person name="Brooks S.Y."/>
            <person name="Carninci P."/>
            <person name="Chao Q."/>
            <person name="Choy N."/>
            <person name="Enju A."/>
            <person name="Goldsmith A.D."/>
            <person name="Gurjal M."/>
            <person name="Hansen N.F."/>
            <person name="Hayashizaki Y."/>
            <person name="Johnson-Hopson C."/>
            <person name="Hsuan V.W."/>
            <person name="Iida K."/>
            <person name="Karnes M."/>
            <person name="Khan S."/>
            <person name="Koesema E."/>
            <person name="Ishida J."/>
            <person name="Jiang P.X."/>
            <person name="Jones T."/>
            <person name="Kawai J."/>
            <person name="Kamiya A."/>
            <person name="Meyers C."/>
            <person name="Nakajima M."/>
            <person name="Narusaka M."/>
            <person name="Seki M."/>
            <person name="Sakurai T."/>
            <person name="Satou M."/>
            <person name="Tamse R."/>
            <person name="Vaysberg M."/>
            <person name="Wallender E.K."/>
            <person name="Wong C."/>
            <person name="Yamamura Y."/>
            <person name="Yuan S."/>
            <person name="Shinozaki K."/>
            <person name="Davis R.W."/>
            <person name="Theologis A."/>
            <person name="Ecker J.R."/>
        </authorList>
    </citation>
    <scope>NUCLEOTIDE SEQUENCE [LARGE SCALE MRNA]</scope>
    <source>
        <strain>cv. Columbia</strain>
    </source>
</reference>
<reference key="4">
    <citation type="submission" date="2006-07" db="EMBL/GenBank/DDBJ databases">
        <title>Large-scale analysis of RIKEN Arabidopsis full-length (RAFL) cDNAs.</title>
        <authorList>
            <person name="Totoki Y."/>
            <person name="Seki M."/>
            <person name="Ishida J."/>
            <person name="Nakajima M."/>
            <person name="Enju A."/>
            <person name="Kamiya A."/>
            <person name="Narusaka M."/>
            <person name="Shin-i T."/>
            <person name="Nakagawa M."/>
            <person name="Sakamoto N."/>
            <person name="Oishi K."/>
            <person name="Kohara Y."/>
            <person name="Kobayashi M."/>
            <person name="Toyoda A."/>
            <person name="Sakaki Y."/>
            <person name="Sakurai T."/>
            <person name="Iida K."/>
            <person name="Akiyama K."/>
            <person name="Satou M."/>
            <person name="Toyoda T."/>
            <person name="Konagaya A."/>
            <person name="Carninci P."/>
            <person name="Kawai J."/>
            <person name="Hayashizaki Y."/>
            <person name="Shinozaki K."/>
        </authorList>
    </citation>
    <scope>NUCLEOTIDE SEQUENCE [LARGE SCALE MRNA]</scope>
    <source>
        <strain>cv. Columbia</strain>
    </source>
</reference>
<gene>
    <name type="ordered locus">At1g15670</name>
    <name type="ORF">F7H2.1</name>
</gene>
<sequence length="359" mass="40179">MELIPDLPETVAYECLLRSSYKQFPLMASVCKLWQREISLSDFFRHRKASGHSQELVVLSQARVDPVKELVSGNKTIPTPVYRISVLELGTGLRSELPPVPGHSNGLPLFCRLVSVGSDLVVLCGLDPVTWRTSDSVFVFSFLTSTWRVGKSMPGGPRSFFACASDSQRNVFVAGGHDEDKNAMMSALVYDVAEDRWAFLPDMGRERDECTAIFHAGKFHVIGGYSTEEQGQFSKTAESFDVTTWRWSPQGEEFLSSEMTMWPPICAAGENGDLYACCRRDLMMMKDDTWYKVGNLPADVCNVSYVAIRRSGNLVVIGSARYGEPSVGYNWDMSNSRWLKLETHDKYEGHVQAGCFLEI</sequence>